<dbReference type="EC" id="3.11.1.1" evidence="1"/>
<dbReference type="EMBL" id="AL513382">
    <property type="protein sequence ID" value="CAD08888.1"/>
    <property type="molecule type" value="Genomic_DNA"/>
</dbReference>
<dbReference type="EMBL" id="AE014613">
    <property type="protein sequence ID" value="AAO70021.1"/>
    <property type="molecule type" value="Genomic_DNA"/>
</dbReference>
<dbReference type="RefSeq" id="NP_455026.1">
    <property type="nucleotide sequence ID" value="NC_003198.1"/>
</dbReference>
<dbReference type="RefSeq" id="WP_001079741.1">
    <property type="nucleotide sequence ID" value="NZ_WSUR01000026.1"/>
</dbReference>
<dbReference type="SMR" id="Q8Z8W5"/>
<dbReference type="STRING" id="220341.gene:17584493"/>
<dbReference type="KEGG" id="stt:t2431"/>
<dbReference type="KEGG" id="sty:STY0471"/>
<dbReference type="PATRIC" id="fig|220341.7.peg.472"/>
<dbReference type="eggNOG" id="COG0637">
    <property type="taxonomic scope" value="Bacteria"/>
</dbReference>
<dbReference type="HOGENOM" id="CLU_045011_12_0_6"/>
<dbReference type="OMA" id="GRPAPWM"/>
<dbReference type="OrthoDB" id="5504491at2"/>
<dbReference type="Proteomes" id="UP000000541">
    <property type="component" value="Chromosome"/>
</dbReference>
<dbReference type="Proteomes" id="UP000002670">
    <property type="component" value="Chromosome"/>
</dbReference>
<dbReference type="GO" id="GO:0005829">
    <property type="term" value="C:cytosol"/>
    <property type="evidence" value="ECO:0007669"/>
    <property type="project" value="TreeGrafter"/>
</dbReference>
<dbReference type="GO" id="GO:0000287">
    <property type="term" value="F:magnesium ion binding"/>
    <property type="evidence" value="ECO:0007669"/>
    <property type="project" value="UniProtKB-UniRule"/>
</dbReference>
<dbReference type="GO" id="GO:0008967">
    <property type="term" value="F:phosphoglycolate phosphatase activity"/>
    <property type="evidence" value="ECO:0007669"/>
    <property type="project" value="TreeGrafter"/>
</dbReference>
<dbReference type="GO" id="GO:0050194">
    <property type="term" value="F:phosphonoacetaldehyde hydrolase activity"/>
    <property type="evidence" value="ECO:0007669"/>
    <property type="project" value="UniProtKB-UniRule"/>
</dbReference>
<dbReference type="GO" id="GO:0006281">
    <property type="term" value="P:DNA repair"/>
    <property type="evidence" value="ECO:0007669"/>
    <property type="project" value="TreeGrafter"/>
</dbReference>
<dbReference type="GO" id="GO:0019700">
    <property type="term" value="P:organic phosphonate catabolic process"/>
    <property type="evidence" value="ECO:0007669"/>
    <property type="project" value="InterPro"/>
</dbReference>
<dbReference type="CDD" id="cd02586">
    <property type="entry name" value="HAD_PHN"/>
    <property type="match status" value="1"/>
</dbReference>
<dbReference type="FunFam" id="1.10.150.240:FF:000006">
    <property type="entry name" value="Phosphonoacetaldehyde hydrolase"/>
    <property type="match status" value="1"/>
</dbReference>
<dbReference type="FunFam" id="3.40.50.1000:FF:000072">
    <property type="entry name" value="Phosphonoacetaldehyde hydrolase"/>
    <property type="match status" value="1"/>
</dbReference>
<dbReference type="Gene3D" id="3.40.50.1000">
    <property type="entry name" value="HAD superfamily/HAD-like"/>
    <property type="match status" value="1"/>
</dbReference>
<dbReference type="Gene3D" id="1.10.150.240">
    <property type="entry name" value="Putative phosphatase, domain 2"/>
    <property type="match status" value="1"/>
</dbReference>
<dbReference type="HAMAP" id="MF_01375">
    <property type="entry name" value="PhnX"/>
    <property type="match status" value="1"/>
</dbReference>
<dbReference type="InterPro" id="IPR050155">
    <property type="entry name" value="HAD-like_hydrolase_sf"/>
</dbReference>
<dbReference type="InterPro" id="IPR036412">
    <property type="entry name" value="HAD-like_sf"/>
</dbReference>
<dbReference type="InterPro" id="IPR006439">
    <property type="entry name" value="HAD-SF_hydro_IA"/>
</dbReference>
<dbReference type="InterPro" id="IPR023214">
    <property type="entry name" value="HAD_sf"/>
</dbReference>
<dbReference type="InterPro" id="IPR023198">
    <property type="entry name" value="PGP-like_dom2"/>
</dbReference>
<dbReference type="InterPro" id="IPR006323">
    <property type="entry name" value="Phosphonoacetald_hydro"/>
</dbReference>
<dbReference type="NCBIfam" id="TIGR01509">
    <property type="entry name" value="HAD-SF-IA-v3"/>
    <property type="match status" value="1"/>
</dbReference>
<dbReference type="NCBIfam" id="TIGR01422">
    <property type="entry name" value="phosphonatase"/>
    <property type="match status" value="1"/>
</dbReference>
<dbReference type="PANTHER" id="PTHR43434">
    <property type="entry name" value="PHOSPHOGLYCOLATE PHOSPHATASE"/>
    <property type="match status" value="1"/>
</dbReference>
<dbReference type="PANTHER" id="PTHR43434:SF19">
    <property type="entry name" value="PHOSPHONOACETALDEHYDE HYDROLASE"/>
    <property type="match status" value="1"/>
</dbReference>
<dbReference type="Pfam" id="PF00702">
    <property type="entry name" value="Hydrolase"/>
    <property type="match status" value="1"/>
</dbReference>
<dbReference type="SFLD" id="SFLDS00003">
    <property type="entry name" value="Haloacid_Dehalogenase"/>
    <property type="match status" value="1"/>
</dbReference>
<dbReference type="SFLD" id="SFLDF00038">
    <property type="entry name" value="phosphonoacetaldehyde_hydrolas"/>
    <property type="match status" value="1"/>
</dbReference>
<dbReference type="SUPFAM" id="SSF56784">
    <property type="entry name" value="HAD-like"/>
    <property type="match status" value="1"/>
</dbReference>
<organism>
    <name type="scientific">Salmonella typhi</name>
    <dbReference type="NCBI Taxonomy" id="90370"/>
    <lineage>
        <taxon>Bacteria</taxon>
        <taxon>Pseudomonadati</taxon>
        <taxon>Pseudomonadota</taxon>
        <taxon>Gammaproteobacteria</taxon>
        <taxon>Enterobacterales</taxon>
        <taxon>Enterobacteriaceae</taxon>
        <taxon>Salmonella</taxon>
    </lineage>
</organism>
<comment type="function">
    <text evidence="1">Involved in phosphonate degradation.</text>
</comment>
<comment type="catalytic activity">
    <reaction evidence="1">
        <text>phosphonoacetaldehyde + H2O = acetaldehyde + phosphate + H(+)</text>
        <dbReference type="Rhea" id="RHEA:18905"/>
        <dbReference type="ChEBI" id="CHEBI:15343"/>
        <dbReference type="ChEBI" id="CHEBI:15377"/>
        <dbReference type="ChEBI" id="CHEBI:15378"/>
        <dbReference type="ChEBI" id="CHEBI:43474"/>
        <dbReference type="ChEBI" id="CHEBI:58383"/>
        <dbReference type="EC" id="3.11.1.1"/>
    </reaction>
</comment>
<comment type="cofactor">
    <cofactor evidence="1">
        <name>Mg(2+)</name>
        <dbReference type="ChEBI" id="CHEBI:18420"/>
    </cofactor>
    <text evidence="1">Binds 1 Mg(2+) ion per subunit.</text>
</comment>
<comment type="subunit">
    <text evidence="1">Homodimer.</text>
</comment>
<comment type="similarity">
    <text evidence="1">Belongs to the HAD-like hydrolase superfamily. PhnX family.</text>
</comment>
<reference key="1">
    <citation type="journal article" date="2001" name="Nature">
        <title>Complete genome sequence of a multiple drug resistant Salmonella enterica serovar Typhi CT18.</title>
        <authorList>
            <person name="Parkhill J."/>
            <person name="Dougan G."/>
            <person name="James K.D."/>
            <person name="Thomson N.R."/>
            <person name="Pickard D."/>
            <person name="Wain J."/>
            <person name="Churcher C.M."/>
            <person name="Mungall K.L."/>
            <person name="Bentley S.D."/>
            <person name="Holden M.T.G."/>
            <person name="Sebaihia M."/>
            <person name="Baker S."/>
            <person name="Basham D."/>
            <person name="Brooks K."/>
            <person name="Chillingworth T."/>
            <person name="Connerton P."/>
            <person name="Cronin A."/>
            <person name="Davis P."/>
            <person name="Davies R.M."/>
            <person name="Dowd L."/>
            <person name="White N."/>
            <person name="Farrar J."/>
            <person name="Feltwell T."/>
            <person name="Hamlin N."/>
            <person name="Haque A."/>
            <person name="Hien T.T."/>
            <person name="Holroyd S."/>
            <person name="Jagels K."/>
            <person name="Krogh A."/>
            <person name="Larsen T.S."/>
            <person name="Leather S."/>
            <person name="Moule S."/>
            <person name="O'Gaora P."/>
            <person name="Parry C."/>
            <person name="Quail M.A."/>
            <person name="Rutherford K.M."/>
            <person name="Simmonds M."/>
            <person name="Skelton J."/>
            <person name="Stevens K."/>
            <person name="Whitehead S."/>
            <person name="Barrell B.G."/>
        </authorList>
    </citation>
    <scope>NUCLEOTIDE SEQUENCE [LARGE SCALE GENOMIC DNA]</scope>
    <source>
        <strain>CT18</strain>
    </source>
</reference>
<reference key="2">
    <citation type="journal article" date="2003" name="J. Bacteriol.">
        <title>Comparative genomics of Salmonella enterica serovar Typhi strains Ty2 and CT18.</title>
        <authorList>
            <person name="Deng W."/>
            <person name="Liou S.-R."/>
            <person name="Plunkett G. III"/>
            <person name="Mayhew G.F."/>
            <person name="Rose D.J."/>
            <person name="Burland V."/>
            <person name="Kodoyianni V."/>
            <person name="Schwartz D.C."/>
            <person name="Blattner F.R."/>
        </authorList>
    </citation>
    <scope>NUCLEOTIDE SEQUENCE [LARGE SCALE GENOMIC DNA]</scope>
    <source>
        <strain>ATCC 700931 / Ty2</strain>
    </source>
</reference>
<protein>
    <recommendedName>
        <fullName evidence="1">Phosphonoacetaldehyde hydrolase</fullName>
        <shortName evidence="1">Phosphonatase</shortName>
        <ecNumber evidence="1">3.11.1.1</ecNumber>
    </recommendedName>
    <alternativeName>
        <fullName evidence="1">Phosphonoacetaldehyde phosphonohydrolase</fullName>
    </alternativeName>
</protein>
<gene>
    <name evidence="1" type="primary">phnX</name>
    <name type="ordered locus">STY0471</name>
    <name type="ordered locus">t2431</name>
</gene>
<evidence type="ECO:0000255" key="1">
    <source>
        <dbReference type="HAMAP-Rule" id="MF_01375"/>
    </source>
</evidence>
<keyword id="KW-0378">Hydrolase</keyword>
<keyword id="KW-0460">Magnesium</keyword>
<keyword id="KW-0479">Metal-binding</keyword>
<keyword id="KW-0704">Schiff base</keyword>
<sequence>MNRIHAVILDWAGTTVDFGSFAPTQIFVEAFRQAFDVEITLAEARVPMGLGKWQHIEALGKLPTVDARWQAKFGRAMSAADIDAIYAAFMPLQIAKVVDFSSPIAGVIDTIATLRAEGIKIGSCSGYPRAVMERLVPAAAEHGYRPDHWVATDDLVAGGRPGPWMALQNVIALGIDAVAHCVKVDDAAPGISEGLNAGMWTVGLAVSGNEFGATWDAYQTMSKEDVAVRREHAASKLYAAGAHYVVDSLADLPEVIAHINARLAQGERP</sequence>
<feature type="chain" id="PRO_0000284600" description="Phosphonoacetaldehyde hydrolase">
    <location>
        <begin position="1"/>
        <end position="269"/>
    </location>
</feature>
<feature type="active site" description="Nucleophile" evidence="1">
    <location>
        <position position="10"/>
    </location>
</feature>
<feature type="active site" description="Schiff-base intermediate with substrate" evidence="1">
    <location>
        <position position="52"/>
    </location>
</feature>
<feature type="binding site" evidence="1">
    <location>
        <position position="10"/>
    </location>
    <ligand>
        <name>Mg(2+)</name>
        <dbReference type="ChEBI" id="CHEBI:18420"/>
    </ligand>
</feature>
<feature type="binding site" evidence="1">
    <location>
        <position position="12"/>
    </location>
    <ligand>
        <name>Mg(2+)</name>
        <dbReference type="ChEBI" id="CHEBI:18420"/>
    </ligand>
</feature>
<feature type="binding site" evidence="1">
    <location>
        <position position="186"/>
    </location>
    <ligand>
        <name>Mg(2+)</name>
        <dbReference type="ChEBI" id="CHEBI:18420"/>
    </ligand>
</feature>
<accession>Q8Z8W5</accession>
<accession>Q7C882</accession>
<proteinExistence type="inferred from homology"/>
<name>PHNX_SALTI</name>